<accession>B4FIJ0</accession>
<accession>A0A1D6G4V8</accession>
<accession>A0A1D6G4V9</accession>
<comment type="function">
    <text evidence="3">Mitochondrial transporter that mediates uptake of thiamine diphosphate (ThDP) into mitochondria.</text>
</comment>
<comment type="subcellular location">
    <subcellularLocation>
        <location evidence="3">Mitochondrion inner membrane</location>
        <topology evidence="1">Multi-pass membrane protein</topology>
    </subcellularLocation>
</comment>
<comment type="tissue specificity">
    <text evidence="3">Ubiquitous with highest expression in pollen.</text>
</comment>
<comment type="similarity">
    <text evidence="5">Belongs to the mitochondrial carrier (TC 2.A.29) family.</text>
</comment>
<comment type="sequence caution" evidence="5">
    <conflict type="erroneous gene model prediction">
        <sequence resource="EMBL-CDS" id="AQK98319"/>
    </conflict>
</comment>
<comment type="sequence caution" evidence="5">
    <conflict type="erroneous gene model prediction">
        <sequence resource="EMBL-CDS" id="AQK98320"/>
    </conflict>
</comment>
<protein>
    <recommendedName>
        <fullName evidence="5">Mitochondrial thiamine diphosphate carrier 1</fullName>
    </recommendedName>
</protein>
<organism>
    <name type="scientific">Zea mays</name>
    <name type="common">Maize</name>
    <dbReference type="NCBI Taxonomy" id="4577"/>
    <lineage>
        <taxon>Eukaryota</taxon>
        <taxon>Viridiplantae</taxon>
        <taxon>Streptophyta</taxon>
        <taxon>Embryophyta</taxon>
        <taxon>Tracheophyta</taxon>
        <taxon>Spermatophyta</taxon>
        <taxon>Magnoliopsida</taxon>
        <taxon>Liliopsida</taxon>
        <taxon>Poales</taxon>
        <taxon>Poaceae</taxon>
        <taxon>PACMAD clade</taxon>
        <taxon>Panicoideae</taxon>
        <taxon>Andropogonodae</taxon>
        <taxon>Andropogoneae</taxon>
        <taxon>Tripsacinae</taxon>
        <taxon>Zea</taxon>
    </lineage>
</organism>
<keyword id="KW-0472">Membrane</keyword>
<keyword id="KW-0496">Mitochondrion</keyword>
<keyword id="KW-0999">Mitochondrion inner membrane</keyword>
<keyword id="KW-1185">Reference proteome</keyword>
<keyword id="KW-0677">Repeat</keyword>
<keyword id="KW-0812">Transmembrane</keyword>
<keyword id="KW-1133">Transmembrane helix</keyword>
<keyword id="KW-0813">Transport</keyword>
<gene>
    <name evidence="4" type="ORF">GRMZM2G118515</name>
    <name evidence="5" type="ORF">ZEAMMB73_394006</name>
    <name evidence="6 7" type="ORF">Zm00001d011918</name>
</gene>
<dbReference type="EMBL" id="CM000784">
    <property type="protein sequence ID" value="AQK98319.1"/>
    <property type="status" value="ALT_SEQ"/>
    <property type="molecule type" value="Genomic_DNA"/>
</dbReference>
<dbReference type="EMBL" id="CM000784">
    <property type="protein sequence ID" value="AQK98320.1"/>
    <property type="status" value="ALT_SEQ"/>
    <property type="molecule type" value="Genomic_DNA"/>
</dbReference>
<dbReference type="EMBL" id="EU962778">
    <property type="protein sequence ID" value="ACG34896.1"/>
    <property type="molecule type" value="mRNA"/>
</dbReference>
<dbReference type="EMBL" id="BT036928">
    <property type="protein sequence ID" value="ACF81933.1"/>
    <property type="molecule type" value="mRNA"/>
</dbReference>
<dbReference type="RefSeq" id="NP_001132898.1">
    <property type="nucleotide sequence ID" value="NM_001139426.1"/>
</dbReference>
<dbReference type="SMR" id="B4FIJ0"/>
<dbReference type="FunCoup" id="B4FIJ0">
    <property type="interactions" value="1467"/>
</dbReference>
<dbReference type="STRING" id="4577.B4FIJ0"/>
<dbReference type="PaxDb" id="4577-GRMZM2G118515_P01"/>
<dbReference type="EnsemblPlants" id="Zm00001eb363480_T002">
    <property type="protein sequence ID" value="Zm00001eb363480_P002"/>
    <property type="gene ID" value="Zm00001eb363480"/>
</dbReference>
<dbReference type="GeneID" id="100194395"/>
<dbReference type="Gramene" id="Zm00001eb363480_T002">
    <property type="protein sequence ID" value="Zm00001eb363480_P002"/>
    <property type="gene ID" value="Zm00001eb363480"/>
</dbReference>
<dbReference type="KEGG" id="zma:100194395"/>
<dbReference type="eggNOG" id="KOG0752">
    <property type="taxonomic scope" value="Eukaryota"/>
</dbReference>
<dbReference type="InParanoid" id="B4FIJ0"/>
<dbReference type="OrthoDB" id="18574at2759"/>
<dbReference type="Proteomes" id="UP000007305">
    <property type="component" value="Chromosome 8"/>
</dbReference>
<dbReference type="ExpressionAtlas" id="B4FIJ0">
    <property type="expression patterns" value="baseline and differential"/>
</dbReference>
<dbReference type="GO" id="GO:0005743">
    <property type="term" value="C:mitochondrial inner membrane"/>
    <property type="evidence" value="ECO:0000318"/>
    <property type="project" value="GO_Central"/>
</dbReference>
<dbReference type="GO" id="GO:0005739">
    <property type="term" value="C:mitochondrion"/>
    <property type="evidence" value="ECO:0000314"/>
    <property type="project" value="CACAO"/>
</dbReference>
<dbReference type="GO" id="GO:0090422">
    <property type="term" value="F:thiamine pyrophosphate transmembrane transporter activity"/>
    <property type="evidence" value="ECO:0000314"/>
    <property type="project" value="UniProtKB"/>
</dbReference>
<dbReference type="GO" id="GO:0015234">
    <property type="term" value="F:thiamine transmembrane transporter activity"/>
    <property type="evidence" value="ECO:0000318"/>
    <property type="project" value="GO_Central"/>
</dbReference>
<dbReference type="GO" id="GO:0030974">
    <property type="term" value="P:thiamine pyrophosphate transmembrane transport"/>
    <property type="evidence" value="ECO:0000314"/>
    <property type="project" value="UniProtKB"/>
</dbReference>
<dbReference type="FunFam" id="1.50.40.10:FF:000011">
    <property type="entry name" value="Mitochondrial thiamine pyrophosphate carrier 1"/>
    <property type="match status" value="1"/>
</dbReference>
<dbReference type="Gene3D" id="1.50.40.10">
    <property type="entry name" value="Mitochondrial carrier domain"/>
    <property type="match status" value="1"/>
</dbReference>
<dbReference type="InterPro" id="IPR002067">
    <property type="entry name" value="Mit_carrier"/>
</dbReference>
<dbReference type="InterPro" id="IPR018108">
    <property type="entry name" value="Mitochondrial_sb/sol_carrier"/>
</dbReference>
<dbReference type="InterPro" id="IPR023395">
    <property type="entry name" value="Mt_carrier_dom_sf"/>
</dbReference>
<dbReference type="PANTHER" id="PTHR24089">
    <property type="entry name" value="SOLUTE CARRIER FAMILY 25"/>
    <property type="match status" value="1"/>
</dbReference>
<dbReference type="Pfam" id="PF00153">
    <property type="entry name" value="Mito_carr"/>
    <property type="match status" value="3"/>
</dbReference>
<dbReference type="PRINTS" id="PR00926">
    <property type="entry name" value="MITOCARRIER"/>
</dbReference>
<dbReference type="SUPFAM" id="SSF103506">
    <property type="entry name" value="Mitochondrial carrier"/>
    <property type="match status" value="1"/>
</dbReference>
<dbReference type="PROSITE" id="PS50920">
    <property type="entry name" value="SOLCAR"/>
    <property type="match status" value="3"/>
</dbReference>
<evidence type="ECO:0000255" key="1"/>
<evidence type="ECO:0000255" key="2">
    <source>
        <dbReference type="PROSITE-ProRule" id="PRU00282"/>
    </source>
</evidence>
<evidence type="ECO:0000269" key="3">
    <source>
    </source>
</evidence>
<evidence type="ECO:0000303" key="4">
    <source>
    </source>
</evidence>
<evidence type="ECO:0000305" key="5"/>
<evidence type="ECO:0000312" key="6">
    <source>
        <dbReference type="EMBL" id="AQK98319.1"/>
    </source>
</evidence>
<evidence type="ECO:0000312" key="7">
    <source>
        <dbReference type="EMBL" id="AQK98320.1"/>
    </source>
</evidence>
<proteinExistence type="evidence at transcript level"/>
<reference key="1">
    <citation type="journal article" date="2009" name="Science">
        <title>The B73 maize genome: complexity, diversity, and dynamics.</title>
        <authorList>
            <person name="Schnable P.S."/>
            <person name="Ware D."/>
            <person name="Fulton R.S."/>
            <person name="Stein J.C."/>
            <person name="Wei F."/>
            <person name="Pasternak S."/>
            <person name="Liang C."/>
            <person name="Zhang J."/>
            <person name="Fulton L."/>
            <person name="Graves T.A."/>
            <person name="Minx P."/>
            <person name="Reily A.D."/>
            <person name="Courtney L."/>
            <person name="Kruchowski S.S."/>
            <person name="Tomlinson C."/>
            <person name="Strong C."/>
            <person name="Delehaunty K."/>
            <person name="Fronick C."/>
            <person name="Courtney B."/>
            <person name="Rock S.M."/>
            <person name="Belter E."/>
            <person name="Du F."/>
            <person name="Kim K."/>
            <person name="Abbott R.M."/>
            <person name="Cotton M."/>
            <person name="Levy A."/>
            <person name="Marchetto P."/>
            <person name="Ochoa K."/>
            <person name="Jackson S.M."/>
            <person name="Gillam B."/>
            <person name="Chen W."/>
            <person name="Yan L."/>
            <person name="Higginbotham J."/>
            <person name="Cardenas M."/>
            <person name="Waligorski J."/>
            <person name="Applebaum E."/>
            <person name="Phelps L."/>
            <person name="Falcone J."/>
            <person name="Kanchi K."/>
            <person name="Thane T."/>
            <person name="Scimone A."/>
            <person name="Thane N."/>
            <person name="Henke J."/>
            <person name="Wang T."/>
            <person name="Ruppert J."/>
            <person name="Shah N."/>
            <person name="Rotter K."/>
            <person name="Hodges J."/>
            <person name="Ingenthron E."/>
            <person name="Cordes M."/>
            <person name="Kohlberg S."/>
            <person name="Sgro J."/>
            <person name="Delgado B."/>
            <person name="Mead K."/>
            <person name="Chinwalla A."/>
            <person name="Leonard S."/>
            <person name="Crouse K."/>
            <person name="Collura K."/>
            <person name="Kudrna D."/>
            <person name="Currie J."/>
            <person name="He R."/>
            <person name="Angelova A."/>
            <person name="Rajasekar S."/>
            <person name="Mueller T."/>
            <person name="Lomeli R."/>
            <person name="Scara G."/>
            <person name="Ko A."/>
            <person name="Delaney K."/>
            <person name="Wissotski M."/>
            <person name="Lopez G."/>
            <person name="Campos D."/>
            <person name="Braidotti M."/>
            <person name="Ashley E."/>
            <person name="Golser W."/>
            <person name="Kim H."/>
            <person name="Lee S."/>
            <person name="Lin J."/>
            <person name="Dujmic Z."/>
            <person name="Kim W."/>
            <person name="Talag J."/>
            <person name="Zuccolo A."/>
            <person name="Fan C."/>
            <person name="Sebastian A."/>
            <person name="Kramer M."/>
            <person name="Spiegel L."/>
            <person name="Nascimento L."/>
            <person name="Zutavern T."/>
            <person name="Miller B."/>
            <person name="Ambroise C."/>
            <person name="Muller S."/>
            <person name="Spooner W."/>
            <person name="Narechania A."/>
            <person name="Ren L."/>
            <person name="Wei S."/>
            <person name="Kumari S."/>
            <person name="Faga B."/>
            <person name="Levy M.J."/>
            <person name="McMahan L."/>
            <person name="Van Buren P."/>
            <person name="Vaughn M.W."/>
            <person name="Ying K."/>
            <person name="Yeh C.-T."/>
            <person name="Emrich S.J."/>
            <person name="Jia Y."/>
            <person name="Kalyanaraman A."/>
            <person name="Hsia A.-P."/>
            <person name="Barbazuk W.B."/>
            <person name="Baucom R.S."/>
            <person name="Brutnell T.P."/>
            <person name="Carpita N.C."/>
            <person name="Chaparro C."/>
            <person name="Chia J.-M."/>
            <person name="Deragon J.-M."/>
            <person name="Estill J.C."/>
            <person name="Fu Y."/>
            <person name="Jeddeloh J.A."/>
            <person name="Han Y."/>
            <person name="Lee H."/>
            <person name="Li P."/>
            <person name="Lisch D.R."/>
            <person name="Liu S."/>
            <person name="Liu Z."/>
            <person name="Nagel D.H."/>
            <person name="McCann M.C."/>
            <person name="SanMiguel P."/>
            <person name="Myers A.M."/>
            <person name="Nettleton D."/>
            <person name="Nguyen J."/>
            <person name="Penning B.W."/>
            <person name="Ponnala L."/>
            <person name="Schneider K.L."/>
            <person name="Schwartz D.C."/>
            <person name="Sharma A."/>
            <person name="Soderlund C."/>
            <person name="Springer N.M."/>
            <person name="Sun Q."/>
            <person name="Wang H."/>
            <person name="Waterman M."/>
            <person name="Westerman R."/>
            <person name="Wolfgruber T.K."/>
            <person name="Yang L."/>
            <person name="Yu Y."/>
            <person name="Zhang L."/>
            <person name="Zhou S."/>
            <person name="Zhu Q."/>
            <person name="Bennetzen J.L."/>
            <person name="Dawe R.K."/>
            <person name="Jiang J."/>
            <person name="Jiang N."/>
            <person name="Presting G.G."/>
            <person name="Wessler S.R."/>
            <person name="Aluru S."/>
            <person name="Martienssen R.A."/>
            <person name="Clifton S.W."/>
            <person name="McCombie W.R."/>
            <person name="Wing R.A."/>
            <person name="Wilson R.K."/>
        </authorList>
    </citation>
    <scope>NUCLEOTIDE SEQUENCE [LARGE SCALE GENOMIC DNA]</scope>
    <source>
        <strain>cv. B73</strain>
    </source>
</reference>
<reference key="2">
    <citation type="journal article" date="2009" name="Plant Mol. Biol.">
        <title>Insights into corn genes derived from large-scale cDNA sequencing.</title>
        <authorList>
            <person name="Alexandrov N.N."/>
            <person name="Brover V.V."/>
            <person name="Freidin S."/>
            <person name="Troukhan M.E."/>
            <person name="Tatarinova T.V."/>
            <person name="Zhang H."/>
            <person name="Swaller T.J."/>
            <person name="Lu Y.-P."/>
            <person name="Bouck J."/>
            <person name="Flavell R.B."/>
            <person name="Feldmann K.A."/>
        </authorList>
    </citation>
    <scope>NUCLEOTIDE SEQUENCE [LARGE SCALE MRNA]</scope>
</reference>
<reference key="3">
    <citation type="journal article" date="2009" name="PLoS Genet.">
        <title>Sequencing, mapping, and analysis of 27,455 maize full-length cDNAs.</title>
        <authorList>
            <person name="Soderlund C."/>
            <person name="Descour A."/>
            <person name="Kudrna D."/>
            <person name="Bomhoff M."/>
            <person name="Boyd L."/>
            <person name="Currie J."/>
            <person name="Angelova A."/>
            <person name="Collura K."/>
            <person name="Wissotski M."/>
            <person name="Ashley E."/>
            <person name="Morrow D."/>
            <person name="Fernandes J."/>
            <person name="Walbot V."/>
            <person name="Yu Y."/>
        </authorList>
    </citation>
    <scope>NUCLEOTIDE SEQUENCE [LARGE SCALE MRNA]</scope>
    <source>
        <strain>cv. B73</strain>
    </source>
</reference>
<reference key="4">
    <citation type="journal article" date="2012" name="Funct. Integr. Genomics">
        <title>Identification of mitochondrial thiamin diphosphate carriers from Arabidopsis and maize.</title>
        <authorList>
            <person name="Frelin O."/>
            <person name="Agrimi G."/>
            <person name="Laera V.L."/>
            <person name="Castegna A."/>
            <person name="Richardson L.G."/>
            <person name="Mullen R.T."/>
            <person name="Lerma-Ortiz C."/>
            <person name="Palmieri F."/>
            <person name="Hanson A.D."/>
        </authorList>
    </citation>
    <scope>FUNCTION</scope>
    <scope>SUBCELLULAR LOCATION</scope>
    <scope>TISSUE SPECIFICITY</scope>
</reference>
<name>TDPC1_MAIZE</name>
<sequence>MGSGEEPSQMRRALVDSLAGAISGGISRTVTSPLDVIKIRFQVQLEPTTSWGILRRDVYGPSKYTGLLQATKDILREEGLPGFWRGNVPALFMYMPYTAIQFTVLHKLKTFASGSSRTEDHLDLSPYLSYVSGAIAGCTATIGSYPFDLLRTILASQGEPKVYPNMRSAFIDIIKTRGVQGLYSGLSPTLVEIIPYAGLQFGSYDTFKRSMMTWNRYKYSHLSFGSEDDSVSSFQLFLCGFAAGTFSKAACHPLDVVKKRFQIEGLKRHPRYGAPIESSTYKGMYHALKEIVVKEGFGGLYKGLFPSLVKSAPAGAVTFVVYEYISDWIGCKAGVE</sequence>
<feature type="chain" id="PRO_0000439895" description="Mitochondrial thiamine diphosphate carrier 1">
    <location>
        <begin position="1"/>
        <end position="336"/>
    </location>
</feature>
<feature type="transmembrane region" description="Helical; Name=1" evidence="5">
    <location>
        <begin position="11"/>
        <end position="27"/>
    </location>
</feature>
<feature type="transmembrane region" description="Helical; Name=2" evidence="1">
    <location>
        <begin position="88"/>
        <end position="105"/>
    </location>
</feature>
<feature type="transmembrane region" description="Helical; Name=3" evidence="1">
    <location>
        <begin position="127"/>
        <end position="150"/>
    </location>
</feature>
<feature type="transmembrane region" description="Helical; Name=4" evidence="1">
    <location>
        <begin position="182"/>
        <end position="199"/>
    </location>
</feature>
<feature type="transmembrane region" description="Helical; Name=5" evidence="1">
    <location>
        <begin position="230"/>
        <end position="246"/>
    </location>
</feature>
<feature type="transmembrane region" description="Helical; Name=6" evidence="1">
    <location>
        <begin position="303"/>
        <end position="322"/>
    </location>
</feature>
<feature type="repeat" description="Solcar 1" evidence="2">
    <location>
        <begin position="11"/>
        <end position="111"/>
    </location>
</feature>
<feature type="repeat" description="Solcar 2" evidence="2">
    <location>
        <begin position="124"/>
        <end position="210"/>
    </location>
</feature>
<feature type="repeat" description="Solcar 3" evidence="2">
    <location>
        <begin position="231"/>
        <end position="328"/>
    </location>
</feature>